<sequence length="490" mass="52387">MNGTMDHPDHPDPDSIKMFVGQVPRSWSEKELRELFEQYGAVYEINVLRDRSQNPPQSKGCCFITFYTRKAALEAQNALHNMKVLPGMHHPIQMKPADSEKNNAVEDRKLFVGMVSKKCNENDIRAMFSQFGQIEESRILRGPDGMSRGCAFVTFTTRSMAQMAIKAMHQAQTMEGCSSPIVVKFADTQKDKEQKRMTQQLQQQMQQLNAASMWGNLAGLSSLAPQYLALLQQTASSGNLNSLSGLHPMGGEYATGMTSGLNAMQLQNLAALAAAASAAQNTPSAGSALTTSSSPLSILTSSGSSPSSNNNSAVNPMASLGALQTLAGATAGLNVGSLAGMAALNGGLGSSLSNGTGSTMEALSQAYSGIQQYAAAALPSLYNQSLLSQQGLGAAGSQKEGPEGANLFIYHLPQEFGDQDLLQMFMPFGNVVSAKVFIDKQTNLSKCFGFVSYDNPVSAQAAIQSMNGFQIGMKRLKVQLKRSKNDSKPY</sequence>
<accession>Q28HE9</accession>
<gene>
    <name type="primary">celf1</name>
    <name type="synonym">cugbp1</name>
    <name type="ORF">TEgg064f02.1</name>
</gene>
<keyword id="KW-0010">Activator</keyword>
<keyword id="KW-0963">Cytoplasm</keyword>
<keyword id="KW-0507">mRNA processing</keyword>
<keyword id="KW-0508">mRNA splicing</keyword>
<keyword id="KW-0539">Nucleus</keyword>
<keyword id="KW-1185">Reference proteome</keyword>
<keyword id="KW-0677">Repeat</keyword>
<keyword id="KW-0694">RNA-binding</keyword>
<feature type="chain" id="PRO_0000295188" description="CUGBP Elav-like family member 1">
    <location>
        <begin position="1"/>
        <end position="490"/>
    </location>
</feature>
<feature type="domain" description="RRM 1" evidence="2">
    <location>
        <begin position="16"/>
        <end position="99"/>
    </location>
</feature>
<feature type="domain" description="RRM 2" evidence="2">
    <location>
        <begin position="108"/>
        <end position="188"/>
    </location>
</feature>
<feature type="domain" description="RRM 3" evidence="2">
    <location>
        <begin position="405"/>
        <end position="483"/>
    </location>
</feature>
<feature type="region of interest" description="Disordered" evidence="3">
    <location>
        <begin position="283"/>
        <end position="312"/>
    </location>
</feature>
<organism>
    <name type="scientific">Xenopus tropicalis</name>
    <name type="common">Western clawed frog</name>
    <name type="synonym">Silurana tropicalis</name>
    <dbReference type="NCBI Taxonomy" id="8364"/>
    <lineage>
        <taxon>Eukaryota</taxon>
        <taxon>Metazoa</taxon>
        <taxon>Chordata</taxon>
        <taxon>Craniata</taxon>
        <taxon>Vertebrata</taxon>
        <taxon>Euteleostomi</taxon>
        <taxon>Amphibia</taxon>
        <taxon>Batrachia</taxon>
        <taxon>Anura</taxon>
        <taxon>Pipoidea</taxon>
        <taxon>Pipidae</taxon>
        <taxon>Xenopodinae</taxon>
        <taxon>Xenopus</taxon>
        <taxon>Silurana</taxon>
    </lineage>
</organism>
<reference key="1">
    <citation type="submission" date="2006-10" db="EMBL/GenBank/DDBJ databases">
        <authorList>
            <consortium name="Sanger Xenopus tropicalis EST/cDNA project"/>
        </authorList>
    </citation>
    <scope>NUCLEOTIDE SEQUENCE [LARGE SCALE MRNA]</scope>
    <source>
        <tissue>Embryo</tissue>
    </source>
</reference>
<proteinExistence type="evidence at transcript level"/>
<protein>
    <recommendedName>
        <fullName>CUGBP Elav-like family member 1</fullName>
        <shortName>CELF-1</shortName>
    </recommendedName>
    <alternativeName>
        <fullName>Bruno-like protein 2</fullName>
    </alternativeName>
    <alternativeName>
        <fullName>CUG triplet repeat RNA-binding protein 1</fullName>
        <shortName>CUG-BP1</shortName>
    </alternativeName>
    <alternativeName>
        <fullName>CUG-BP- and ETR-3-like factor 1</fullName>
    </alternativeName>
    <alternativeName>
        <fullName>RNA-binding protein BRUNOL-2</fullName>
    </alternativeName>
</protein>
<dbReference type="EMBL" id="CR760913">
    <property type="protein sequence ID" value="CAJ82289.1"/>
    <property type="molecule type" value="mRNA"/>
</dbReference>
<dbReference type="RefSeq" id="NP_001017152.1">
    <property type="nucleotide sequence ID" value="NM_001017152.2"/>
</dbReference>
<dbReference type="BMRB" id="Q28HE9"/>
<dbReference type="SMR" id="Q28HE9"/>
<dbReference type="FunCoup" id="Q28HE9">
    <property type="interactions" value="3402"/>
</dbReference>
<dbReference type="STRING" id="8364.ENSXETP00000032308"/>
<dbReference type="PaxDb" id="8364-ENSXETP00000019816"/>
<dbReference type="GeneID" id="549906"/>
<dbReference type="KEGG" id="xtr:549906"/>
<dbReference type="AGR" id="Xenbase:XB-GENE-854036"/>
<dbReference type="CTD" id="10658"/>
<dbReference type="Xenbase" id="XB-GENE-854036">
    <property type="gene designation" value="celf1"/>
</dbReference>
<dbReference type="eggNOG" id="KOG0144">
    <property type="taxonomic scope" value="Eukaryota"/>
</dbReference>
<dbReference type="HOGENOM" id="CLU_015367_0_2_1"/>
<dbReference type="InParanoid" id="Q28HE9"/>
<dbReference type="OrthoDB" id="410044at2759"/>
<dbReference type="Proteomes" id="UP000008143">
    <property type="component" value="Chromosome 4"/>
</dbReference>
<dbReference type="GO" id="GO:0005737">
    <property type="term" value="C:cytoplasm"/>
    <property type="evidence" value="ECO:0007669"/>
    <property type="project" value="UniProtKB-SubCell"/>
</dbReference>
<dbReference type="GO" id="GO:0005634">
    <property type="term" value="C:nucleus"/>
    <property type="evidence" value="ECO:0007669"/>
    <property type="project" value="UniProtKB-SubCell"/>
</dbReference>
<dbReference type="GO" id="GO:1990904">
    <property type="term" value="C:ribonucleoprotein complex"/>
    <property type="evidence" value="ECO:0007669"/>
    <property type="project" value="InterPro"/>
</dbReference>
<dbReference type="GO" id="GO:0003723">
    <property type="term" value="F:RNA binding"/>
    <property type="evidence" value="ECO:0007669"/>
    <property type="project" value="UniProtKB-KW"/>
</dbReference>
<dbReference type="GO" id="GO:0006397">
    <property type="term" value="P:mRNA processing"/>
    <property type="evidence" value="ECO:0007669"/>
    <property type="project" value="UniProtKB-KW"/>
</dbReference>
<dbReference type="GO" id="GO:0008380">
    <property type="term" value="P:RNA splicing"/>
    <property type="evidence" value="ECO:0007669"/>
    <property type="project" value="UniProtKB-KW"/>
</dbReference>
<dbReference type="CDD" id="cd12631">
    <property type="entry name" value="RRM1_CELF1_2_Bruno"/>
    <property type="match status" value="1"/>
</dbReference>
<dbReference type="CDD" id="cd12634">
    <property type="entry name" value="RRM2_CELF1_2"/>
    <property type="match status" value="1"/>
</dbReference>
<dbReference type="CDD" id="cd12638">
    <property type="entry name" value="RRM3_CELF1_2"/>
    <property type="match status" value="1"/>
</dbReference>
<dbReference type="FunFam" id="3.30.70.330:FF:000013">
    <property type="entry name" value="CUGBP Elav-like family member 1 isoform 2"/>
    <property type="match status" value="1"/>
</dbReference>
<dbReference type="FunFam" id="3.30.70.330:FF:000015">
    <property type="entry name" value="CUGBP Elav-like family member 1 isoform 2"/>
    <property type="match status" value="1"/>
</dbReference>
<dbReference type="FunFam" id="3.30.70.330:FF:000016">
    <property type="entry name" value="CUGBP Elav-like family member 1 isoform 2"/>
    <property type="match status" value="1"/>
</dbReference>
<dbReference type="Gene3D" id="3.30.70.330">
    <property type="match status" value="3"/>
</dbReference>
<dbReference type="InterPro" id="IPR034196">
    <property type="entry name" value="CELF1/2_RRM1"/>
</dbReference>
<dbReference type="InterPro" id="IPR034198">
    <property type="entry name" value="CELF1/2_RRM2"/>
</dbReference>
<dbReference type="InterPro" id="IPR034199">
    <property type="entry name" value="CELF1/2_RRM3"/>
</dbReference>
<dbReference type="InterPro" id="IPR002343">
    <property type="entry name" value="Hud_Sxl_RNA"/>
</dbReference>
<dbReference type="InterPro" id="IPR012677">
    <property type="entry name" value="Nucleotide-bd_a/b_plait_sf"/>
</dbReference>
<dbReference type="InterPro" id="IPR035979">
    <property type="entry name" value="RBD_domain_sf"/>
</dbReference>
<dbReference type="InterPro" id="IPR000504">
    <property type="entry name" value="RRM_dom"/>
</dbReference>
<dbReference type="PANTHER" id="PTHR24012">
    <property type="entry name" value="RNA BINDING PROTEIN"/>
    <property type="match status" value="1"/>
</dbReference>
<dbReference type="Pfam" id="PF00076">
    <property type="entry name" value="RRM_1"/>
    <property type="match status" value="3"/>
</dbReference>
<dbReference type="PRINTS" id="PR00961">
    <property type="entry name" value="HUDSXLRNA"/>
</dbReference>
<dbReference type="SMART" id="SM00360">
    <property type="entry name" value="RRM"/>
    <property type="match status" value="3"/>
</dbReference>
<dbReference type="SUPFAM" id="SSF54928">
    <property type="entry name" value="RNA-binding domain, RBD"/>
    <property type="match status" value="2"/>
</dbReference>
<dbReference type="PROSITE" id="PS50102">
    <property type="entry name" value="RRM"/>
    <property type="match status" value="3"/>
</dbReference>
<comment type="function">
    <text evidence="1">RNA-binding protein implicated in the regulation of several post-transcriptional events. May be involved in pre-mRNA alternative splicing, mRNA translation activation and stability (By similarity). Mediates the rapid and sequence-specific cytoplasmic deadenylation of EDEN-containing maternal mRNAs following fertilization. Binds to AU-rich sequences (AREs) of jun mRNA. Binds to the embryonic deadenylation element (EDEN) motif localized in the 3'-UTR of maternal mRNAs. Binds to RNA containing several repeats of the consensus sequence 5'-UGU-3'. EDEN-dependent deadenylation is enhanced by the presence of an additional cis element composed of three AUU repeats (By similarity).</text>
</comment>
<comment type="subunit">
    <text evidence="1">Oligomer. Oligomerization is required for RNA-binding and EDEN-dependent deadenylation.</text>
</comment>
<comment type="subcellular location">
    <subcellularLocation>
        <location evidence="1">Nucleus</location>
    </subcellularLocation>
    <subcellularLocation>
        <location evidence="1">Cytoplasm</location>
    </subcellularLocation>
</comment>
<comment type="domain">
    <text evidence="1">The 2 N-terminal RRMs and a part of the linker region (between RRM2 and RRM3) are necessary for binding to EDEN of mos mRNA.</text>
</comment>
<comment type="PTM">
    <text evidence="1">Phosphorylated during oocyte maturation and dephosphorylated following egg activation. Dephosphorylation is calcium dependent and correlates with the increase in the activity of EDEN-dependent deadenylation (By similarity).</text>
</comment>
<comment type="similarity">
    <text evidence="4">Belongs to the CELF/BRUNOL family.</text>
</comment>
<name>CELF1_XENTR</name>
<evidence type="ECO:0000250" key="1"/>
<evidence type="ECO:0000255" key="2">
    <source>
        <dbReference type="PROSITE-ProRule" id="PRU00176"/>
    </source>
</evidence>
<evidence type="ECO:0000256" key="3">
    <source>
        <dbReference type="SAM" id="MobiDB-lite"/>
    </source>
</evidence>
<evidence type="ECO:0000305" key="4"/>